<organism>
    <name type="scientific">Aquifex aeolicus (strain VF5)</name>
    <dbReference type="NCBI Taxonomy" id="224324"/>
    <lineage>
        <taxon>Bacteria</taxon>
        <taxon>Pseudomonadati</taxon>
        <taxon>Aquificota</taxon>
        <taxon>Aquificia</taxon>
        <taxon>Aquificales</taxon>
        <taxon>Aquificaceae</taxon>
        <taxon>Aquifex</taxon>
    </lineage>
</organism>
<accession>O66561</accession>
<reference key="1">
    <citation type="journal article" date="1998" name="Nature">
        <title>The complete genome of the hyperthermophilic bacterium Aquifex aeolicus.</title>
        <authorList>
            <person name="Deckert G."/>
            <person name="Warren P.V."/>
            <person name="Gaasterland T."/>
            <person name="Young W.G."/>
            <person name="Lenox A.L."/>
            <person name="Graham D.E."/>
            <person name="Overbeek R."/>
            <person name="Snead M.A."/>
            <person name="Keller M."/>
            <person name="Aujay M."/>
            <person name="Huber R."/>
            <person name="Feldman R.A."/>
            <person name="Short J.M."/>
            <person name="Olsen G.J."/>
            <person name="Swanson R.V."/>
        </authorList>
    </citation>
    <scope>NUCLEOTIDE SEQUENCE [LARGE SCALE GENOMIC DNA]</scope>
    <source>
        <strain>VF5</strain>
    </source>
</reference>
<gene>
    <name evidence="1" type="primary">yidC</name>
    <name type="ordered locus">aq_175</name>
</gene>
<comment type="function">
    <text evidence="1">Required for the insertion and/or proper folding and/or complex formation of integral membrane proteins into the membrane. Involved in integration of membrane proteins that insert both dependently and independently of the Sec translocase complex, as well as at least some lipoproteins. Aids folding of multispanning membrane proteins.</text>
</comment>
<comment type="subunit">
    <text evidence="1">Interacts with the Sec translocase complex via SecD. Specifically interacts with transmembrane segments of nascent integral membrane proteins during membrane integration.</text>
</comment>
<comment type="subcellular location">
    <subcellularLocation>
        <location evidence="1">Cell membrane</location>
        <topology evidence="1">Multi-pass membrane protein</topology>
    </subcellularLocation>
</comment>
<comment type="similarity">
    <text evidence="1">Belongs to the OXA1/ALB3/YidC family. Type 1 subfamily.</text>
</comment>
<keyword id="KW-1003">Cell membrane</keyword>
<keyword id="KW-0143">Chaperone</keyword>
<keyword id="KW-0472">Membrane</keyword>
<keyword id="KW-0653">Protein transport</keyword>
<keyword id="KW-1185">Reference proteome</keyword>
<keyword id="KW-0812">Transmembrane</keyword>
<keyword id="KW-1133">Transmembrane helix</keyword>
<keyword id="KW-0813">Transport</keyword>
<sequence>MMDNDNQFWKRFLIFTILMFLFITAYELFYIYYVKPSQPQKTEKKEVVKKEEFKNVNLPQLMLGTFREKQEYKNTKTVKLGIYSLELSEKGGKILRFIDQKYGFDLISKAERELKIFPLEIFTGNPDLDQKLNFGEYEIKEGKNSVELIHKELKVKKILSYKNGAIHLSVEGLKPPFWVFVGSPPDDEAFYTHVGPVLKINGEVVRLDVDDLKGINEFEGNIEFGGEESRYFFKGAKDYQKHIVYKVKLGDKFVSLSTFLYDGEKTIYLGAKDYARLRELGLVDTLDWGTLKIIVKPLFLFLYWIYEHTGSWVLSILVLTFIVRIFLFPLGYKSVVSMQKLQELAPKMEKIKQKYKDDPVKMQEEMMKLYAETGFNPMAGCLPILLQIPIFFALYKVLIITVDLKVSSFLWIPSLADKDPYYILPVIMGLTMILQQKMTPSPDPKQALVGYITSVAFTLLFINFPAGLVLYWTLNNVFNIIQNYLIKEVLLKDKSKGGSKKK</sequence>
<evidence type="ECO:0000255" key="1">
    <source>
        <dbReference type="HAMAP-Rule" id="MF_01810"/>
    </source>
</evidence>
<protein>
    <recommendedName>
        <fullName evidence="1">Membrane protein insertase YidC</fullName>
    </recommendedName>
    <alternativeName>
        <fullName evidence="1">Foldase YidC</fullName>
    </alternativeName>
    <alternativeName>
        <fullName evidence="1">Membrane integrase YidC</fullName>
    </alternativeName>
    <alternativeName>
        <fullName evidence="1">Membrane protein YidC</fullName>
    </alternativeName>
</protein>
<name>OXAA_AQUAE</name>
<dbReference type="EMBL" id="AE000657">
    <property type="protein sequence ID" value="AAC06534.1"/>
    <property type="molecule type" value="Genomic_DNA"/>
</dbReference>
<dbReference type="PIR" id="F70316">
    <property type="entry name" value="F70316"/>
</dbReference>
<dbReference type="RefSeq" id="NP_213121.1">
    <property type="nucleotide sequence ID" value="NC_000918.1"/>
</dbReference>
<dbReference type="RefSeq" id="WP_010880059.1">
    <property type="nucleotide sequence ID" value="NC_000918.1"/>
</dbReference>
<dbReference type="SMR" id="O66561"/>
<dbReference type="STRING" id="224324.aq_175"/>
<dbReference type="EnsemblBacteria" id="AAC06534">
    <property type="protein sequence ID" value="AAC06534"/>
    <property type="gene ID" value="aq_175"/>
</dbReference>
<dbReference type="KEGG" id="aae:aq_175"/>
<dbReference type="PATRIC" id="fig|224324.8.peg.151"/>
<dbReference type="eggNOG" id="COG0706">
    <property type="taxonomic scope" value="Bacteria"/>
</dbReference>
<dbReference type="HOGENOM" id="CLU_016535_3_1_0"/>
<dbReference type="InParanoid" id="O66561"/>
<dbReference type="OrthoDB" id="9780552at2"/>
<dbReference type="Proteomes" id="UP000000798">
    <property type="component" value="Chromosome"/>
</dbReference>
<dbReference type="GO" id="GO:0005886">
    <property type="term" value="C:plasma membrane"/>
    <property type="evidence" value="ECO:0000318"/>
    <property type="project" value="GO_Central"/>
</dbReference>
<dbReference type="GO" id="GO:0032977">
    <property type="term" value="F:membrane insertase activity"/>
    <property type="evidence" value="ECO:0000318"/>
    <property type="project" value="GO_Central"/>
</dbReference>
<dbReference type="GO" id="GO:0051205">
    <property type="term" value="P:protein insertion into membrane"/>
    <property type="evidence" value="ECO:0000318"/>
    <property type="project" value="GO_Central"/>
</dbReference>
<dbReference type="GO" id="GO:0015031">
    <property type="term" value="P:protein transport"/>
    <property type="evidence" value="ECO:0007669"/>
    <property type="project" value="UniProtKB-KW"/>
</dbReference>
<dbReference type="CDD" id="cd20070">
    <property type="entry name" value="5TM_YidC_Alb3"/>
    <property type="match status" value="1"/>
</dbReference>
<dbReference type="HAMAP" id="MF_01810">
    <property type="entry name" value="YidC_type1"/>
    <property type="match status" value="1"/>
</dbReference>
<dbReference type="InterPro" id="IPR019998">
    <property type="entry name" value="Membr_insert_YidC"/>
</dbReference>
<dbReference type="InterPro" id="IPR028053">
    <property type="entry name" value="Membr_insert_YidC_N"/>
</dbReference>
<dbReference type="InterPro" id="IPR001708">
    <property type="entry name" value="YidC/ALB3/OXA1/COX18"/>
</dbReference>
<dbReference type="InterPro" id="IPR028055">
    <property type="entry name" value="YidC/Oxa/ALB_C"/>
</dbReference>
<dbReference type="InterPro" id="IPR047196">
    <property type="entry name" value="YidC_ALB_C"/>
</dbReference>
<dbReference type="NCBIfam" id="TIGR03593">
    <property type="entry name" value="yidC_nterm"/>
    <property type="match status" value="1"/>
</dbReference>
<dbReference type="NCBIfam" id="TIGR03592">
    <property type="entry name" value="yidC_oxa1_cterm"/>
    <property type="match status" value="1"/>
</dbReference>
<dbReference type="PANTHER" id="PTHR12428:SF65">
    <property type="entry name" value="CYTOCHROME C OXIDASE ASSEMBLY PROTEIN COX18, MITOCHONDRIAL"/>
    <property type="match status" value="1"/>
</dbReference>
<dbReference type="PANTHER" id="PTHR12428">
    <property type="entry name" value="OXA1"/>
    <property type="match status" value="1"/>
</dbReference>
<dbReference type="Pfam" id="PF02096">
    <property type="entry name" value="60KD_IMP"/>
    <property type="match status" value="1"/>
</dbReference>
<dbReference type="PRINTS" id="PR01900">
    <property type="entry name" value="YIDCPROTEIN"/>
</dbReference>
<proteinExistence type="inferred from homology"/>
<feature type="chain" id="PRO_0000124686" description="Membrane protein insertase YidC">
    <location>
        <begin position="1"/>
        <end position="502"/>
    </location>
</feature>
<feature type="transmembrane region" description="Helical" evidence="1">
    <location>
        <begin position="12"/>
        <end position="32"/>
    </location>
</feature>
<feature type="transmembrane region" description="Helical" evidence="1">
    <location>
        <begin position="286"/>
        <end position="306"/>
    </location>
</feature>
<feature type="transmembrane region" description="Helical" evidence="1">
    <location>
        <begin position="312"/>
        <end position="332"/>
    </location>
</feature>
<feature type="transmembrane region" description="Helical" evidence="1">
    <location>
        <begin position="382"/>
        <end position="402"/>
    </location>
</feature>
<feature type="transmembrane region" description="Helical" evidence="1">
    <location>
        <begin position="409"/>
        <end position="429"/>
    </location>
</feature>
<feature type="transmembrane region" description="Helical" evidence="1">
    <location>
        <begin position="452"/>
        <end position="472"/>
    </location>
</feature>